<evidence type="ECO:0000250" key="1">
    <source>
        <dbReference type="UniProtKB" id="P20962"/>
    </source>
</evidence>
<evidence type="ECO:0000250" key="2">
    <source>
        <dbReference type="UniProtKB" id="Q9D0J8"/>
    </source>
</evidence>
<evidence type="ECO:0000256" key="3">
    <source>
        <dbReference type="SAM" id="MobiDB-lite"/>
    </source>
</evidence>
<evidence type="ECO:0000269" key="4">
    <source>
    </source>
</evidence>
<evidence type="ECO:0000305" key="5"/>
<evidence type="ECO:0007744" key="6">
    <source>
    </source>
</evidence>
<gene>
    <name type="primary">Ptms</name>
    <name type="synonym">Znbp</name>
</gene>
<accession>P04550</accession>
<proteinExistence type="evidence at protein level"/>
<comment type="function">
    <text>Parathymosin may mediate immune function by blocking the effect of prothymosin alpha which confers resistance to certain opportunistic infections.</text>
</comment>
<comment type="similarity">
    <text evidence="5">Belongs to the pro/parathymosin family.</text>
</comment>
<feature type="initiator methionine" description="Removed" evidence="4">
    <location>
        <position position="1"/>
    </location>
</feature>
<feature type="chain" id="PRO_0000191634" description="Parathymosin">
    <location>
        <begin position="2"/>
        <end position="102"/>
    </location>
</feature>
<feature type="region of interest" description="Disordered" evidence="3">
    <location>
        <begin position="1"/>
        <end position="102"/>
    </location>
</feature>
<feature type="compositionally biased region" description="Basic and acidic residues" evidence="3">
    <location>
        <begin position="13"/>
        <end position="37"/>
    </location>
</feature>
<feature type="compositionally biased region" description="Acidic residues" evidence="3">
    <location>
        <begin position="38"/>
        <end position="75"/>
    </location>
</feature>
<feature type="modified residue" description="N-acetylserine" evidence="4">
    <location>
        <position position="2"/>
    </location>
</feature>
<feature type="modified residue" description="Phosphoserine" evidence="6">
    <location>
        <position position="2"/>
    </location>
</feature>
<feature type="modified residue" description="N6-acetyllysine" evidence="1">
    <location>
        <position position="4"/>
    </location>
</feature>
<feature type="modified residue" description="Phosphoserine" evidence="6">
    <location>
        <position position="5"/>
    </location>
</feature>
<feature type="modified residue" description="Phosphoserine" evidence="2">
    <location>
        <position position="13"/>
    </location>
</feature>
<feature type="modified residue" description="N6-acetyllysine" evidence="1">
    <location>
        <position position="15"/>
    </location>
</feature>
<feature type="modified residue" description="Phosphothreonine" evidence="6">
    <location>
        <position position="52"/>
    </location>
</feature>
<feature type="modified residue" description="N6-acetyllysine" evidence="1">
    <location>
        <position position="92"/>
    </location>
</feature>
<reference key="1">
    <citation type="journal article" date="1989" name="FEBS Lett.">
        <title>The primary sequence of the PFK-1 inactivating zinc-binding protein as deduced from cDNA sequencing. Identity of the zinc-binding protein with rat parathymosin.</title>
        <authorList>
            <person name="Trompeter H.-I."/>
            <person name="Brand I.A."/>
            <person name="Soeling H.-D."/>
        </authorList>
    </citation>
    <scope>NUCLEOTIDE SEQUENCE</scope>
</reference>
<reference key="2">
    <citation type="journal article" date="1992" name="FEBS Lett.">
        <title>Cloning and characterisation of a gene encoding the 11.5 kDa zinc-binding protein (parathymosin-alpha).</title>
        <authorList>
            <person name="Trompeter H.-I."/>
            <person name="Soeling H.-D."/>
        </authorList>
    </citation>
    <scope>NUCLEOTIDE SEQUENCE [GENOMIC DNA]</scope>
    <source>
        <strain>Fischer</strain>
        <tissue>Liver</tissue>
    </source>
</reference>
<reference key="3">
    <citation type="submission" date="2007-04" db="UniProtKB">
        <authorList>
            <person name="Lubec G."/>
            <person name="Chen W.-Q."/>
        </authorList>
    </citation>
    <scope>PROTEIN SEQUENCE OF 5-15</scope>
    <scope>IDENTIFICATION BY MASS SPECTROMETRY</scope>
    <source>
        <strain>Sprague-Dawley</strain>
        <tissue>Hippocampus</tissue>
    </source>
</reference>
<reference key="4">
    <citation type="journal article" date="1988" name="Arch. Biochem. Biophys.">
        <title>Prothymosin alpha and parathymosin: amino acid sequences deduced from the cloned rat spleen cDNAs.</title>
        <authorList>
            <person name="Frangou-Lazaridis M."/>
            <person name="Clinton M."/>
            <person name="Goodall G.J."/>
            <person name="Horecker B.L."/>
        </authorList>
    </citation>
    <scope>NUCLEOTIDE SEQUENCE OF 23-102</scope>
    <source>
        <tissue>Spleen</tissue>
    </source>
</reference>
<reference key="5">
    <citation type="journal article" date="1986" name="Proc. Natl. Acad. Sci. U.S.A.">
        <title>The primary structure of rat parathymosin.</title>
        <authorList>
            <person name="Komiyama T."/>
            <person name="Pan L.-X."/>
            <person name="Haritos A.A."/>
            <person name="Wideman J.W."/>
            <person name="Pan Y.-C.E."/>
            <person name="Chang M."/>
            <person name="Rogers I."/>
            <person name="Horecker B.L."/>
        </authorList>
    </citation>
    <scope>PRELIMINARY PROTEIN SEQUENCE OF 2-102</scope>
    <scope>CLEAVAGE OF INITIATOR METHIONINE</scope>
    <scope>ACETYLATION AT SER-2</scope>
</reference>
<reference key="6">
    <citation type="journal article" date="1985" name="Proc. Natl. Acad. Sci. U.S.A.">
        <title>Parathymosin alpha: a peptide from rat tissues with structural homology to prothymosin alpha.</title>
        <authorList>
            <person name="Haritos A.A."/>
            <person name="Salvin S.B."/>
            <person name="Blacher R."/>
            <person name="Stein S."/>
            <person name="Horecker B.L."/>
        </authorList>
    </citation>
    <scope>PRELIMINARY PROTEIN SEQUENCE OF 2-31</scope>
</reference>
<reference key="7">
    <citation type="journal article" date="1988" name="Biochem. Biophys. Res. Commun.">
        <title>Bovine parathymosin: amino acid sequence and comparison with rat parathymosin.</title>
        <authorList>
            <person name="Panneerselvam C."/>
            <person name="Clinton M."/>
            <person name="Wellner D."/>
            <person name="Horecker B.L."/>
        </authorList>
    </citation>
    <scope>SEQUENCE REVISION TO 1-5</scope>
</reference>
<reference key="8">
    <citation type="journal article" date="2012" name="Nat. Commun.">
        <title>Quantitative maps of protein phosphorylation sites across 14 different rat organs and tissues.</title>
        <authorList>
            <person name="Lundby A."/>
            <person name="Secher A."/>
            <person name="Lage K."/>
            <person name="Nordsborg N.B."/>
            <person name="Dmytriyev A."/>
            <person name="Lundby C."/>
            <person name="Olsen J.V."/>
        </authorList>
    </citation>
    <scope>PHOSPHORYLATION [LARGE SCALE ANALYSIS] AT SER-2; SER-5 AND THR-52</scope>
    <scope>IDENTIFICATION BY MASS SPECTROMETRY [LARGE SCALE ANALYSIS]</scope>
</reference>
<sequence length="102" mass="11559">MSEKSVEAAAELSAKDLKEKKDKVEEKAGRKERKKEVVEEEENGAEEEEEETAEDGEDDDEGDEEDEEEEEEEDEGPVRKRTAEEEDEADPKRQKTENGASA</sequence>
<name>PTMS_RAT</name>
<protein>
    <recommendedName>
        <fullName>Parathymosin</fullName>
    </recommendedName>
    <alternativeName>
        <fullName>Zinc-binding 11.5 kDa protein</fullName>
    </alternativeName>
</protein>
<dbReference type="EMBL" id="M20616">
    <property type="protein sequence ID" value="AAA42249.1"/>
    <property type="molecule type" value="mRNA"/>
</dbReference>
<dbReference type="EMBL" id="M33025">
    <property type="protein sequence ID" value="AAA41810.1"/>
    <property type="molecule type" value="mRNA"/>
</dbReference>
<dbReference type="EMBL" id="X64053">
    <property type="protein sequence ID" value="CAA45411.1"/>
    <property type="status" value="ALT_SEQ"/>
    <property type="molecule type" value="Genomic_DNA"/>
</dbReference>
<dbReference type="EMBL" id="X16481">
    <property type="protein sequence ID" value="CAA34501.1"/>
    <property type="molecule type" value="mRNA"/>
</dbReference>
<dbReference type="PIR" id="S02031">
    <property type="entry name" value="S02031"/>
</dbReference>
<dbReference type="PIR" id="S05212">
    <property type="entry name" value="B31512"/>
</dbReference>
<dbReference type="PIR" id="S20422">
    <property type="entry name" value="S20422"/>
</dbReference>
<dbReference type="RefSeq" id="NP_114181.1">
    <property type="nucleotide sequence ID" value="NM_031975.2"/>
</dbReference>
<dbReference type="SMR" id="P04550"/>
<dbReference type="BioGRID" id="249838">
    <property type="interactions" value="1"/>
</dbReference>
<dbReference type="FunCoup" id="P04550">
    <property type="interactions" value="6"/>
</dbReference>
<dbReference type="IntAct" id="P04550">
    <property type="interactions" value="1"/>
</dbReference>
<dbReference type="STRING" id="10116.ENSRNOP00000069993"/>
<dbReference type="iPTMnet" id="P04550"/>
<dbReference type="PhosphoSitePlus" id="P04550"/>
<dbReference type="jPOST" id="P04550"/>
<dbReference type="PaxDb" id="10116-ENSRNOP00000022209"/>
<dbReference type="GeneID" id="83801"/>
<dbReference type="KEGG" id="rno:83801"/>
<dbReference type="UCSC" id="RGD:621529">
    <property type="organism name" value="rat"/>
</dbReference>
<dbReference type="AGR" id="RGD:621529"/>
<dbReference type="CTD" id="5763"/>
<dbReference type="RGD" id="621529">
    <property type="gene designation" value="Ptms"/>
</dbReference>
<dbReference type="VEuPathDB" id="HostDB:ENSRNOG00000060098"/>
<dbReference type="eggNOG" id="ENOG502SSXW">
    <property type="taxonomic scope" value="Eukaryota"/>
</dbReference>
<dbReference type="HOGENOM" id="CLU_087174_1_0_1"/>
<dbReference type="InParanoid" id="P04550"/>
<dbReference type="PRO" id="PR:P04550"/>
<dbReference type="Proteomes" id="UP000002494">
    <property type="component" value="Chromosome 4"/>
</dbReference>
<dbReference type="Bgee" id="ENSRNOG00000060098">
    <property type="expression patterns" value="Expressed in frontal cortex and 19 other cell types or tissues"/>
</dbReference>
<dbReference type="ExpressionAtlas" id="P04550">
    <property type="expression patterns" value="baseline and differential"/>
</dbReference>
<dbReference type="GO" id="GO:0005634">
    <property type="term" value="C:nucleus"/>
    <property type="evidence" value="ECO:0000318"/>
    <property type="project" value="GO_Central"/>
</dbReference>
<dbReference type="GO" id="GO:0004857">
    <property type="term" value="F:enzyme inhibitor activity"/>
    <property type="evidence" value="ECO:0000304"/>
    <property type="project" value="RGD"/>
</dbReference>
<dbReference type="GO" id="GO:0042393">
    <property type="term" value="F:histone binding"/>
    <property type="evidence" value="ECO:0000318"/>
    <property type="project" value="GO_Central"/>
</dbReference>
<dbReference type="GO" id="GO:0008270">
    <property type="term" value="F:zinc ion binding"/>
    <property type="evidence" value="ECO:0000314"/>
    <property type="project" value="RGD"/>
</dbReference>
<dbReference type="GO" id="GO:0002376">
    <property type="term" value="P:immune system process"/>
    <property type="evidence" value="ECO:0007669"/>
    <property type="project" value="UniProtKB-KW"/>
</dbReference>
<dbReference type="GO" id="GO:0043066">
    <property type="term" value="P:negative regulation of apoptotic process"/>
    <property type="evidence" value="ECO:0000318"/>
    <property type="project" value="GO_Central"/>
</dbReference>
<dbReference type="GO" id="GO:0045944">
    <property type="term" value="P:positive regulation of transcription by RNA polymerase II"/>
    <property type="evidence" value="ECO:0000318"/>
    <property type="project" value="GO_Central"/>
</dbReference>
<dbReference type="InterPro" id="IPR004931">
    <property type="entry name" value="Pro/parathymosin"/>
</dbReference>
<dbReference type="PANTHER" id="PTHR22745:SF3">
    <property type="entry name" value="PARATHYMOSIN"/>
    <property type="match status" value="1"/>
</dbReference>
<dbReference type="PANTHER" id="PTHR22745">
    <property type="entry name" value="PROTHYMOSIN ALPHA"/>
    <property type="match status" value="1"/>
</dbReference>
<dbReference type="Pfam" id="PF03247">
    <property type="entry name" value="Prothymosin"/>
    <property type="match status" value="1"/>
</dbReference>
<organism>
    <name type="scientific">Rattus norvegicus</name>
    <name type="common">Rat</name>
    <dbReference type="NCBI Taxonomy" id="10116"/>
    <lineage>
        <taxon>Eukaryota</taxon>
        <taxon>Metazoa</taxon>
        <taxon>Chordata</taxon>
        <taxon>Craniata</taxon>
        <taxon>Vertebrata</taxon>
        <taxon>Euteleostomi</taxon>
        <taxon>Mammalia</taxon>
        <taxon>Eutheria</taxon>
        <taxon>Euarchontoglires</taxon>
        <taxon>Glires</taxon>
        <taxon>Rodentia</taxon>
        <taxon>Myomorpha</taxon>
        <taxon>Muroidea</taxon>
        <taxon>Muridae</taxon>
        <taxon>Murinae</taxon>
        <taxon>Rattus</taxon>
    </lineage>
</organism>
<keyword id="KW-0007">Acetylation</keyword>
<keyword id="KW-0903">Direct protein sequencing</keyword>
<keyword id="KW-0391">Immunity</keyword>
<keyword id="KW-0597">Phosphoprotein</keyword>
<keyword id="KW-1185">Reference proteome</keyword>
<keyword id="KW-0862">Zinc</keyword>